<sequence>MSLKRHSLRRNACHLETRAGIPTILYSDATGQRGMDKNIGEQLNRAYEAFRQACMDRDSAVRELQQKQTENYEQRIREQQEQLSFQQNLIDRLKSQLLLVDSSRDNSYGYVPLLEDSDRRKNNLTLDEPHDKVKLGTLRDKQSKVRRQEVSSGKESAKGLNIPLHHERDNIEKTFWDLKEEFHRICLLAKAQKDHLSKLNIPDIATDTQCSVPIQCTDKTEKQEALFKPQAKDDINRGMSCVTAVTPRGLGRDEEDTSFESLSKFNVKFPPMDNDSIFLHSTPEAPSILAPATPETVCQDRFNMEVRDNPGNFVKTEETLFEIQGIDPITSAIQNLKTTDKTNPSNLRATCLPAGDHNVFYVNTFPLQDPPDAPFPSLDSPGKAVRGPQQPFWKPFLNQDTDLVVPSDSDSELLKPLVCEFCQELFPPSITSRGDFLRHLNTHFNGET</sequence>
<comment type="function">
    <text evidence="1">Adapter protein involved in I-kappa-B-kinase (IKK) regulation which constitutively binds TBK1 and IKBKE playing a role in antiviral innate immunity. Acts as a regulator of TRAF function by maintaining them in a latent state. Blocks TRAF2 binding to LMP1 and inhibits LMP1-mediated NF-kappa-B activation. Negatively regulates NF-kappaB signaling and cell survival upon DNA damage. Plays a role as an adapter to assemble ZC3H12A, USP10 in a deubiquitination complex which plays a negative feedback response to attenuate NF-kappaB activation through the deubiquitination of IKBKG or TRAF6 in response to interleukin-1-beta (IL1B) stimulation or upon DNA damage. Promotes UBP10-induced deubiquitination of TRAF6 in response to DNA damage. May control negatively TRAF2-mediated NF-kappa-B activation signaled by CD40, TNFR1 and TNFR2. Essential for the efficient induction of IRF-dependent transcription following infection with Sendai virus.</text>
</comment>
<comment type="subunit">
    <text evidence="1 4">Homodimer (By similarity). Found in a deubiquitination complex with TANK, USP10 and ZC3H12A; this complex inhibits genotoxic stress- or interleukin-1-beta-mediated NF-kappaB activation by promoting IKBKG or TRAF6 deubiquitination (By similarity). Interacts with IKBKG; this interaction increases in response to DNA damage (By similarity). Interacts with TRAF6; this interaction increases in response to DNA damage and recruits USP10 to the ubiquitinated TRAF6 (By similarity). Interacts with USP10; this interaction increases in response to DNA damage (By similarity). Interacts with TBK1 and IKBKE (By similarity). Also interacts with TRAF1, TRAF2, and TRAF3 by binding to their TRAF-C domains; the interaction with TRAF2 is disrupted by the phosphorylation of TANK by IKBKE (By similarity). Interacts more strongly with TRAF1 and TRAF2 than TRAF3 (By similarity). Part of a ternary complex consisting of TANK, IKBKB and IKBKG (By similarity). Interacts with IKBKG; the interaction is enhanced by IKBKE and TBK1 (PubMed:12133833).</text>
</comment>
<comment type="interaction">
    <interactant intactId="EBI-646116">
        <id>P70347</id>
    </interactant>
    <interactant intactId="EBI-764193">
        <id>Q9WUN2</id>
        <label>Tbk1</label>
    </interactant>
    <organismsDiffer>false</organismsDiffer>
    <experiments>7</experiments>
</comment>
<comment type="interaction">
    <interactant intactId="EBI-646125">
        <id>P70347-1</id>
    </interactant>
    <interactant intactId="EBI-520123">
        <id>P39428</id>
        <label>Traf1</label>
    </interactant>
    <organismsDiffer>false</organismsDiffer>
    <experiments>12</experiments>
</comment>
<comment type="interaction">
    <interactant intactId="EBI-646125">
        <id>P70347-1</id>
    </interactant>
    <interactant intactId="EBI-520016">
        <id>P39429</id>
        <label>Traf2</label>
    </interactant>
    <organismsDiffer>false</organismsDiffer>
    <experiments>7</experiments>
</comment>
<comment type="subcellular location">
    <subcellularLocation>
        <location>Cytoplasm</location>
    </subcellularLocation>
</comment>
<comment type="alternative products">
    <event type="alternative splicing"/>
    <isoform>
        <id>P70347-1</id>
        <name>1</name>
        <name>Beta</name>
        <sequence type="displayed"/>
    </isoform>
    <isoform>
        <id>P70347-2</id>
        <name>2</name>
        <name>Alpha</name>
        <sequence type="described" ref="VSP_004444"/>
    </isoform>
    <isoform>
        <id>P70347-3</id>
        <name>3</name>
        <name>Gamma</name>
        <sequence type="described" ref="VSP_004445 VSP_004446"/>
    </isoform>
    <isoform>
        <id>P70347-4</id>
        <name>4</name>
        <sequence type="described" ref="VSP_004447 VSP_004448"/>
    </isoform>
</comment>
<comment type="tissue specificity">
    <text>Heart, brain, spleen, lung, liver, skeletal muscle, kidney and testis.</text>
</comment>
<name>TANK_MOUSE</name>
<protein>
    <recommendedName>
        <fullName>TRAF family member-associated NF-kappa-B activator</fullName>
    </recommendedName>
    <alternativeName>
        <fullName>TRAF-interacting protein</fullName>
        <shortName>I-TRAF</shortName>
    </alternativeName>
</protein>
<organism>
    <name type="scientific">Mus musculus</name>
    <name type="common">Mouse</name>
    <dbReference type="NCBI Taxonomy" id="10090"/>
    <lineage>
        <taxon>Eukaryota</taxon>
        <taxon>Metazoa</taxon>
        <taxon>Chordata</taxon>
        <taxon>Craniata</taxon>
        <taxon>Vertebrata</taxon>
        <taxon>Euteleostomi</taxon>
        <taxon>Mammalia</taxon>
        <taxon>Eutheria</taxon>
        <taxon>Euarchontoglires</taxon>
        <taxon>Glires</taxon>
        <taxon>Rodentia</taxon>
        <taxon>Myomorpha</taxon>
        <taxon>Muroidea</taxon>
        <taxon>Muridae</taxon>
        <taxon>Murinae</taxon>
        <taxon>Mus</taxon>
        <taxon>Mus</taxon>
    </lineage>
</organism>
<proteinExistence type="evidence at protein level"/>
<gene>
    <name type="primary">Tank</name>
    <name type="synonym">Itraf</name>
</gene>
<evidence type="ECO:0000250" key="1">
    <source>
        <dbReference type="UniProtKB" id="Q92844"/>
    </source>
</evidence>
<evidence type="ECO:0000255" key="2"/>
<evidence type="ECO:0000255" key="3">
    <source>
        <dbReference type="PROSITE-ProRule" id="PRU01253"/>
    </source>
</evidence>
<evidence type="ECO:0000269" key="4">
    <source>
    </source>
</evidence>
<evidence type="ECO:0000303" key="5">
    <source>
    </source>
</evidence>
<evidence type="ECO:0000305" key="6"/>
<reference key="1">
    <citation type="journal article" date="1996" name="Proc. Natl. Acad. Sci. U.S.A.">
        <title>I-TRAF is a novel TRAF-interacting protein that regulates TRAF-mediated signal transduction.</title>
        <authorList>
            <person name="Rothe M."/>
            <person name="Xiong J."/>
            <person name="Shu H.-B."/>
            <person name="Williamson K."/>
            <person name="Goddard A."/>
            <person name="Goeddel D.V."/>
        </authorList>
    </citation>
    <scope>NUCLEOTIDE SEQUENCE [MRNA]</scope>
    <scope>ALTERNATIVE SPLICING</scope>
</reference>
<reference key="2">
    <citation type="journal article" date="1996" name="Genes Dev.">
        <title>TANK, a co-inducer with TRAF2 of TNF- and CD 40L-mediated NF-kappaB activation.</title>
        <authorList>
            <person name="Cheng G."/>
            <person name="Baltimore D."/>
        </authorList>
    </citation>
    <scope>NUCLEOTIDE SEQUENCE [MRNA] (ISOFORM 2)</scope>
    <source>
        <strain>C57BL/Kaplan</strain>
        <tissue>T-cell lymphoma</tissue>
    </source>
</reference>
<reference key="3">
    <citation type="journal article" date="2002" name="J. Biol. Chem.">
        <title>Association of the adaptor TANK with the I kappa B kinase (IKK) regulator NEMO connects IKK complexes with IKK epsilon and TBK1 kinases.</title>
        <authorList>
            <person name="Chariot A."/>
            <person name="Leonardi A."/>
            <person name="Muller J."/>
            <person name="Bonif M."/>
            <person name="Brown K."/>
            <person name="Siebenlist U."/>
        </authorList>
    </citation>
    <scope>INTERACTION WITH IKBKG</scope>
</reference>
<reference key="4">
    <citation type="journal article" date="2010" name="Cell">
        <title>A tissue-specific atlas of mouse protein phosphorylation and expression.</title>
        <authorList>
            <person name="Huttlin E.L."/>
            <person name="Jedrychowski M.P."/>
            <person name="Elias J.E."/>
            <person name="Goswami T."/>
            <person name="Rad R."/>
            <person name="Beausoleil S.A."/>
            <person name="Villen J."/>
            <person name="Haas W."/>
            <person name="Sowa M.E."/>
            <person name="Gygi S.P."/>
        </authorList>
    </citation>
    <scope>IDENTIFICATION BY MASS SPECTROMETRY [LARGE SCALE ANALYSIS]</scope>
    <source>
        <tissue>Lung</tissue>
    </source>
</reference>
<accession>P70347</accession>
<accession>Q61178</accession>
<keyword id="KW-0025">Alternative splicing</keyword>
<keyword id="KW-0175">Coiled coil</keyword>
<keyword id="KW-0963">Cytoplasm</keyword>
<keyword id="KW-0227">DNA damage</keyword>
<keyword id="KW-0479">Metal-binding</keyword>
<keyword id="KW-0597">Phosphoprotein</keyword>
<keyword id="KW-1185">Reference proteome</keyword>
<keyword id="KW-0862">Zinc</keyword>
<keyword id="KW-0863">Zinc-finger</keyword>
<dbReference type="EMBL" id="U59864">
    <property type="protein sequence ID" value="AAC52781.1"/>
    <property type="molecule type" value="mRNA"/>
</dbReference>
<dbReference type="EMBL" id="U51907">
    <property type="protein sequence ID" value="AAB02204.1"/>
    <property type="molecule type" value="mRNA"/>
</dbReference>
<dbReference type="CCDS" id="CCDS16061.1">
    <molecule id="P70347-1"/>
</dbReference>
<dbReference type="CCDS" id="CCDS50592.1">
    <molecule id="P70347-2"/>
</dbReference>
<dbReference type="RefSeq" id="NP_001157543.1">
    <molecule id="P70347-2"/>
    <property type="nucleotide sequence ID" value="NM_001164071.1"/>
</dbReference>
<dbReference type="RefSeq" id="NP_001157544.1">
    <property type="nucleotide sequence ID" value="NM_001164072.1"/>
</dbReference>
<dbReference type="RefSeq" id="NP_001342196.1">
    <molecule id="P70347-2"/>
    <property type="nucleotide sequence ID" value="NM_001355267.1"/>
</dbReference>
<dbReference type="RefSeq" id="NP_035659.1">
    <molecule id="P70347-1"/>
    <property type="nucleotide sequence ID" value="NM_011529.2"/>
</dbReference>
<dbReference type="RefSeq" id="XP_006499151.1">
    <property type="nucleotide sequence ID" value="XM_006499088.3"/>
</dbReference>
<dbReference type="RefSeq" id="XP_017172402.1">
    <property type="nucleotide sequence ID" value="XM_017316913.1"/>
</dbReference>
<dbReference type="SMR" id="P70347"/>
<dbReference type="BioGRID" id="203965">
    <property type="interactions" value="6"/>
</dbReference>
<dbReference type="CORUM" id="P70347"/>
<dbReference type="DIP" id="DIP-33701N"/>
<dbReference type="FunCoup" id="P70347">
    <property type="interactions" value="1644"/>
</dbReference>
<dbReference type="IntAct" id="P70347">
    <property type="interactions" value="4"/>
</dbReference>
<dbReference type="MINT" id="P70347"/>
<dbReference type="STRING" id="10090.ENSMUSP00000077219"/>
<dbReference type="GlyGen" id="P70347">
    <property type="glycosylation" value="2 sites, 1 O-linked glycan (1 site)"/>
</dbReference>
<dbReference type="iPTMnet" id="P70347"/>
<dbReference type="PhosphoSitePlus" id="P70347"/>
<dbReference type="jPOST" id="P70347"/>
<dbReference type="PaxDb" id="10090-ENSMUSP00000108114"/>
<dbReference type="ProteomicsDB" id="263006">
    <molecule id="P70347-1"/>
</dbReference>
<dbReference type="ProteomicsDB" id="263007">
    <molecule id="P70347-2"/>
</dbReference>
<dbReference type="ProteomicsDB" id="263008">
    <molecule id="P70347-3"/>
</dbReference>
<dbReference type="ProteomicsDB" id="263009">
    <molecule id="P70347-4"/>
</dbReference>
<dbReference type="Pumba" id="P70347"/>
<dbReference type="Antibodypedia" id="4155">
    <property type="antibodies" value="473 antibodies from 38 providers"/>
</dbReference>
<dbReference type="DNASU" id="21353"/>
<dbReference type="Ensembl" id="ENSMUST00000078074.9">
    <molecule id="P70347-1"/>
    <property type="protein sequence ID" value="ENSMUSP00000077219.3"/>
    <property type="gene ID" value="ENSMUSG00000064289.16"/>
</dbReference>
<dbReference type="Ensembl" id="ENSMUST00000112501.9">
    <molecule id="P70347-2"/>
    <property type="protein sequence ID" value="ENSMUSP00000108120.3"/>
    <property type="gene ID" value="ENSMUSG00000064289.16"/>
</dbReference>
<dbReference type="GeneID" id="21353"/>
<dbReference type="KEGG" id="mmu:21353"/>
<dbReference type="UCSC" id="uc008juw.2">
    <molecule id="P70347-1"/>
    <property type="organism name" value="mouse"/>
</dbReference>
<dbReference type="AGR" id="MGI:107676"/>
<dbReference type="CTD" id="10010"/>
<dbReference type="MGI" id="MGI:107676">
    <property type="gene designation" value="Tank"/>
</dbReference>
<dbReference type="VEuPathDB" id="HostDB:ENSMUSG00000064289"/>
<dbReference type="eggNOG" id="ENOG502QRM3">
    <property type="taxonomic scope" value="Eukaryota"/>
</dbReference>
<dbReference type="GeneTree" id="ENSGT00390000008712"/>
<dbReference type="HOGENOM" id="CLU_053153_0_0_1"/>
<dbReference type="InParanoid" id="P70347"/>
<dbReference type="OMA" id="IWQPQDN"/>
<dbReference type="OrthoDB" id="9937252at2759"/>
<dbReference type="PhylomeDB" id="P70347"/>
<dbReference type="Reactome" id="R-MMU-936964">
    <property type="pathway name" value="Activation of IRF3, IRF7 mediated by TBK1, IKKEpsilon (IKBKE)"/>
</dbReference>
<dbReference type="Reactome" id="R-MMU-9824878">
    <property type="pathway name" value="Regulation of TBK1, IKKEpsilon (IKBKE)-mediated activation of IRF3, IRF7"/>
</dbReference>
<dbReference type="BioGRID-ORCS" id="21353">
    <property type="hits" value="2 hits in 76 CRISPR screens"/>
</dbReference>
<dbReference type="ChiTaRS" id="Tank">
    <property type="organism name" value="mouse"/>
</dbReference>
<dbReference type="PRO" id="PR:P70347"/>
<dbReference type="Proteomes" id="UP000000589">
    <property type="component" value="Chromosome 2"/>
</dbReference>
<dbReference type="RNAct" id="P70347">
    <property type="molecule type" value="protein"/>
</dbReference>
<dbReference type="Bgee" id="ENSMUSG00000064289">
    <property type="expression patterns" value="Expressed in granulocyte and 261 other cell types or tissues"/>
</dbReference>
<dbReference type="ExpressionAtlas" id="P70347">
    <property type="expression patterns" value="baseline and differential"/>
</dbReference>
<dbReference type="GO" id="GO:0005829">
    <property type="term" value="C:cytosol"/>
    <property type="evidence" value="ECO:0007669"/>
    <property type="project" value="Ensembl"/>
</dbReference>
<dbReference type="GO" id="GO:0032991">
    <property type="term" value="C:protein-containing complex"/>
    <property type="evidence" value="ECO:0000250"/>
    <property type="project" value="UniProtKB"/>
</dbReference>
<dbReference type="GO" id="GO:0004843">
    <property type="term" value="F:cysteine-type deubiquitinase activity"/>
    <property type="evidence" value="ECO:0007669"/>
    <property type="project" value="Ensembl"/>
</dbReference>
<dbReference type="GO" id="GO:0035800">
    <property type="term" value="F:deubiquitinase activator activity"/>
    <property type="evidence" value="ECO:0000250"/>
    <property type="project" value="UniProtKB"/>
</dbReference>
<dbReference type="GO" id="GO:0060090">
    <property type="term" value="F:molecular adaptor activity"/>
    <property type="evidence" value="ECO:0007669"/>
    <property type="project" value="Ensembl"/>
</dbReference>
<dbReference type="GO" id="GO:0140678">
    <property type="term" value="F:molecular function inhibitor activity"/>
    <property type="evidence" value="ECO:0000314"/>
    <property type="project" value="MGI"/>
</dbReference>
<dbReference type="GO" id="GO:0031625">
    <property type="term" value="F:ubiquitin protein ligase binding"/>
    <property type="evidence" value="ECO:0007669"/>
    <property type="project" value="Ensembl"/>
</dbReference>
<dbReference type="GO" id="GO:0008270">
    <property type="term" value="F:zinc ion binding"/>
    <property type="evidence" value="ECO:0007669"/>
    <property type="project" value="UniProtKB-KW"/>
</dbReference>
<dbReference type="GO" id="GO:0071347">
    <property type="term" value="P:cellular response to interleukin-1"/>
    <property type="evidence" value="ECO:0000250"/>
    <property type="project" value="UniProtKB"/>
</dbReference>
<dbReference type="GO" id="GO:0071479">
    <property type="term" value="P:cellular response to ionizing radiation"/>
    <property type="evidence" value="ECO:0000250"/>
    <property type="project" value="UniProtKB"/>
</dbReference>
<dbReference type="GO" id="GO:0071356">
    <property type="term" value="P:cellular response to tumor necrosis factor"/>
    <property type="evidence" value="ECO:0000250"/>
    <property type="project" value="UniProtKB"/>
</dbReference>
<dbReference type="GO" id="GO:0006974">
    <property type="term" value="P:DNA damage response"/>
    <property type="evidence" value="ECO:0000250"/>
    <property type="project" value="UniProtKB"/>
</dbReference>
<dbReference type="GO" id="GO:0043124">
    <property type="term" value="P:negative regulation of canonical NF-kappaB signal transduction"/>
    <property type="evidence" value="ECO:0000250"/>
    <property type="project" value="UniProtKB"/>
</dbReference>
<dbReference type="GO" id="GO:0010804">
    <property type="term" value="P:negative regulation of tumor necrosis factor-mediated signaling pathway"/>
    <property type="evidence" value="ECO:0000314"/>
    <property type="project" value="MGI"/>
</dbReference>
<dbReference type="GO" id="GO:1903003">
    <property type="term" value="P:positive regulation of protein deubiquitination"/>
    <property type="evidence" value="ECO:0000250"/>
    <property type="project" value="UniProtKB"/>
</dbReference>
<dbReference type="GO" id="GO:0032481">
    <property type="term" value="P:positive regulation of type I interferon production"/>
    <property type="evidence" value="ECO:0007669"/>
    <property type="project" value="Ensembl"/>
</dbReference>
<dbReference type="GO" id="GO:2000158">
    <property type="term" value="P:positive regulation of ubiquitin-specific protease activity"/>
    <property type="evidence" value="ECO:0000250"/>
    <property type="project" value="UniProtKB"/>
</dbReference>
<dbReference type="InterPro" id="IPR041641">
    <property type="entry name" value="CALCOCO1/2_Zn_UBZ1"/>
</dbReference>
<dbReference type="InterPro" id="IPR039669">
    <property type="entry name" value="TANK"/>
</dbReference>
<dbReference type="InterPro" id="IPR024581">
    <property type="entry name" value="TBD"/>
</dbReference>
<dbReference type="PANTHER" id="PTHR15249">
    <property type="entry name" value="TRAF FAMILY MEMBER-ASSOCIATED NF-KAPPA-B ACTIVATOR"/>
    <property type="match status" value="1"/>
</dbReference>
<dbReference type="PANTHER" id="PTHR15249:SF0">
    <property type="entry name" value="TRAF FAMILY MEMBER-ASSOCIATED NF-KAPPA-B ACTIVATOR"/>
    <property type="match status" value="1"/>
</dbReference>
<dbReference type="Pfam" id="PF12845">
    <property type="entry name" value="TBD"/>
    <property type="match status" value="1"/>
</dbReference>
<dbReference type="PROSITE" id="PS51905">
    <property type="entry name" value="ZF_UBZ1"/>
    <property type="match status" value="1"/>
</dbReference>
<feature type="chain" id="PRO_0000072428" description="TRAF family member-associated NF-kappa-B activator">
    <location>
        <begin position="1"/>
        <end position="448"/>
    </location>
</feature>
<feature type="zinc finger region" description="UBZ1-type" evidence="3">
    <location>
        <begin position="416"/>
        <end position="443"/>
    </location>
</feature>
<feature type="region of interest" description="Necessary for interaction with ZC3H12A" evidence="1">
    <location>
        <begin position="35"/>
        <end position="65"/>
    </location>
</feature>
<feature type="region of interest" description="Necessary for interaction with TRAF6" evidence="1">
    <location>
        <begin position="105"/>
        <end position="224"/>
    </location>
</feature>
<feature type="region of interest" description="Interaction with TBK1 and IKBKE">
    <location>
        <begin position="166"/>
        <end position="205"/>
    </location>
</feature>
<feature type="region of interest" description="TRAF family member interaction">
    <location>
        <begin position="205"/>
        <end position="224"/>
    </location>
</feature>
<feature type="coiled-coil region" evidence="2">
    <location>
        <begin position="60"/>
        <end position="98"/>
    </location>
</feature>
<feature type="binding site" evidence="3">
    <location>
        <position position="419"/>
    </location>
    <ligand>
        <name>Zn(2+)</name>
        <dbReference type="ChEBI" id="CHEBI:29105"/>
    </ligand>
</feature>
<feature type="binding site" evidence="3">
    <location>
        <position position="422"/>
    </location>
    <ligand>
        <name>Zn(2+)</name>
        <dbReference type="ChEBI" id="CHEBI:29105"/>
    </ligand>
</feature>
<feature type="binding site" evidence="3">
    <location>
        <position position="439"/>
    </location>
    <ligand>
        <name>Zn(2+)</name>
        <dbReference type="ChEBI" id="CHEBI:29105"/>
    </ligand>
</feature>
<feature type="binding site" evidence="3">
    <location>
        <position position="443"/>
    </location>
    <ligand>
        <name>Zn(2+)</name>
        <dbReference type="ChEBI" id="CHEBI:29105"/>
    </ligand>
</feature>
<feature type="modified residue" description="Phosphoserine" evidence="1">
    <location>
        <position position="211"/>
    </location>
</feature>
<feature type="modified residue" description="Phosphothreonine" evidence="1">
    <location>
        <position position="246"/>
    </location>
</feature>
<feature type="modified residue" description="Phosphoserine" evidence="1">
    <location>
        <position position="258"/>
    </location>
</feature>
<feature type="modified residue" description="Phosphoserine" evidence="1">
    <location>
        <position position="261"/>
    </location>
</feature>
<feature type="modified residue" description="Phosphoserine" evidence="1">
    <location>
        <position position="377"/>
    </location>
</feature>
<feature type="modified residue" description="Phosphoserine" evidence="1">
    <location>
        <position position="380"/>
    </location>
</feature>
<feature type="splice variant" id="VSP_004444" description="In isoform 2." evidence="5">
    <location>
        <begin position="1"/>
        <end position="34"/>
    </location>
</feature>
<feature type="splice variant" id="VSP_004445" description="In isoform 3." evidence="6">
    <original>GMSCVTAVTPRGLG</original>
    <variation>ERRVCQLETTMCSM</variation>
    <location>
        <begin position="238"/>
        <end position="251"/>
    </location>
</feature>
<feature type="splice variant" id="VSP_004446" description="In isoform 3." evidence="6">
    <location>
        <begin position="252"/>
        <end position="448"/>
    </location>
</feature>
<feature type="splice variant" id="VSP_004447" description="In isoform 4." evidence="6">
    <original>PFWKP</original>
    <variation>VTVLH</variation>
    <location>
        <begin position="391"/>
        <end position="395"/>
    </location>
</feature>
<feature type="splice variant" id="VSP_004448" description="In isoform 4." evidence="6">
    <location>
        <begin position="396"/>
        <end position="448"/>
    </location>
</feature>
<feature type="sequence conflict" description="In Ref. 2; AAB02204." evidence="6" ref="2">
    <location>
        <position position="68"/>
    </location>
</feature>